<dbReference type="EC" id="4.6.1.12" evidence="1"/>
<dbReference type="EMBL" id="BA000022">
    <property type="protein sequence ID" value="BAA17466.1"/>
    <property type="molecule type" value="Genomic_DNA"/>
</dbReference>
<dbReference type="PIR" id="S77363">
    <property type="entry name" value="S77363"/>
</dbReference>
<dbReference type="SMR" id="P73426"/>
<dbReference type="FunCoup" id="P73426">
    <property type="interactions" value="401"/>
</dbReference>
<dbReference type="IntAct" id="P73426">
    <property type="interactions" value="1"/>
</dbReference>
<dbReference type="STRING" id="1148.gene:10498330"/>
<dbReference type="PaxDb" id="1148-1652545"/>
<dbReference type="EnsemblBacteria" id="BAA17466">
    <property type="protein sequence ID" value="BAA17466"/>
    <property type="gene ID" value="BAA17466"/>
</dbReference>
<dbReference type="KEGG" id="syn:slr1542"/>
<dbReference type="eggNOG" id="COG0245">
    <property type="taxonomic scope" value="Bacteria"/>
</dbReference>
<dbReference type="InParanoid" id="P73426"/>
<dbReference type="PhylomeDB" id="P73426"/>
<dbReference type="UniPathway" id="UPA00056">
    <property type="reaction ID" value="UER00095"/>
</dbReference>
<dbReference type="Proteomes" id="UP000001425">
    <property type="component" value="Chromosome"/>
</dbReference>
<dbReference type="GO" id="GO:0008685">
    <property type="term" value="F:2-C-methyl-D-erythritol 2,4-cyclodiphosphate synthase activity"/>
    <property type="evidence" value="ECO:0000318"/>
    <property type="project" value="GO_Central"/>
</dbReference>
<dbReference type="GO" id="GO:0046872">
    <property type="term" value="F:metal ion binding"/>
    <property type="evidence" value="ECO:0007669"/>
    <property type="project" value="UniProtKB-KW"/>
</dbReference>
<dbReference type="GO" id="GO:0019288">
    <property type="term" value="P:isopentenyl diphosphate biosynthetic process, methylerythritol 4-phosphate pathway"/>
    <property type="evidence" value="ECO:0007669"/>
    <property type="project" value="UniProtKB-UniRule"/>
</dbReference>
<dbReference type="GO" id="GO:0016114">
    <property type="term" value="P:terpenoid biosynthetic process"/>
    <property type="evidence" value="ECO:0007669"/>
    <property type="project" value="InterPro"/>
</dbReference>
<dbReference type="CDD" id="cd00554">
    <property type="entry name" value="MECDP_synthase"/>
    <property type="match status" value="1"/>
</dbReference>
<dbReference type="FunFam" id="3.30.1330.50:FF:000001">
    <property type="entry name" value="2-C-methyl-D-erythritol 2,4-cyclodiphosphate synthase"/>
    <property type="match status" value="1"/>
</dbReference>
<dbReference type="Gene3D" id="3.30.1330.50">
    <property type="entry name" value="2-C-methyl-D-erythritol 2,4-cyclodiphosphate synthase"/>
    <property type="match status" value="1"/>
</dbReference>
<dbReference type="HAMAP" id="MF_00107">
    <property type="entry name" value="IspF"/>
    <property type="match status" value="1"/>
</dbReference>
<dbReference type="InterPro" id="IPR003526">
    <property type="entry name" value="MECDP_synthase"/>
</dbReference>
<dbReference type="InterPro" id="IPR020555">
    <property type="entry name" value="MECDP_synthase_CS"/>
</dbReference>
<dbReference type="InterPro" id="IPR036571">
    <property type="entry name" value="MECDP_synthase_sf"/>
</dbReference>
<dbReference type="NCBIfam" id="TIGR00151">
    <property type="entry name" value="ispF"/>
    <property type="match status" value="1"/>
</dbReference>
<dbReference type="PANTHER" id="PTHR43181">
    <property type="entry name" value="2-C-METHYL-D-ERYTHRITOL 2,4-CYCLODIPHOSPHATE SYNTHASE, CHLOROPLASTIC"/>
    <property type="match status" value="1"/>
</dbReference>
<dbReference type="PANTHER" id="PTHR43181:SF1">
    <property type="entry name" value="2-C-METHYL-D-ERYTHRITOL 2,4-CYCLODIPHOSPHATE SYNTHASE, CHLOROPLASTIC"/>
    <property type="match status" value="1"/>
</dbReference>
<dbReference type="Pfam" id="PF02542">
    <property type="entry name" value="YgbB"/>
    <property type="match status" value="1"/>
</dbReference>
<dbReference type="SUPFAM" id="SSF69765">
    <property type="entry name" value="IpsF-like"/>
    <property type="match status" value="1"/>
</dbReference>
<dbReference type="PROSITE" id="PS01350">
    <property type="entry name" value="ISPF"/>
    <property type="match status" value="1"/>
</dbReference>
<accession>P73426</accession>
<protein>
    <recommendedName>
        <fullName evidence="1">2-C-methyl-D-erythritol 2,4-cyclodiphosphate synthase</fullName>
        <shortName evidence="1">MECDP-synthase</shortName>
        <shortName evidence="1">MECPP-synthase</shortName>
        <shortName evidence="1">MECPS</shortName>
        <ecNumber evidence="1">4.6.1.12</ecNumber>
    </recommendedName>
</protein>
<comment type="function">
    <text evidence="1">Involved in the biosynthesis of isopentenyl diphosphate (IPP) and dimethylallyl diphosphate (DMAPP), two major building blocks of isoprenoid compounds. Catalyzes the conversion of 4-diphosphocytidyl-2-C-methyl-D-erythritol 2-phosphate (CDP-ME2P) to 2-C-methyl-D-erythritol 2,4-cyclodiphosphate (ME-CPP) with a corresponding release of cytidine 5-monophosphate (CMP).</text>
</comment>
<comment type="catalytic activity">
    <reaction evidence="1">
        <text>4-CDP-2-C-methyl-D-erythritol 2-phosphate = 2-C-methyl-D-erythritol 2,4-cyclic diphosphate + CMP</text>
        <dbReference type="Rhea" id="RHEA:23864"/>
        <dbReference type="ChEBI" id="CHEBI:57919"/>
        <dbReference type="ChEBI" id="CHEBI:58483"/>
        <dbReference type="ChEBI" id="CHEBI:60377"/>
        <dbReference type="EC" id="4.6.1.12"/>
    </reaction>
</comment>
<comment type="cofactor">
    <cofactor evidence="1">
        <name>a divalent metal cation</name>
        <dbReference type="ChEBI" id="CHEBI:60240"/>
    </cofactor>
    <text evidence="1">Binds 1 divalent metal cation per subunit.</text>
</comment>
<comment type="pathway">
    <text evidence="1">Isoprenoid biosynthesis; isopentenyl diphosphate biosynthesis via DXP pathway; isopentenyl diphosphate from 1-deoxy-D-xylulose 5-phosphate: step 4/6.</text>
</comment>
<comment type="subunit">
    <text evidence="1">Homotrimer.</text>
</comment>
<comment type="similarity">
    <text evidence="1">Belongs to the IspF family.</text>
</comment>
<proteinExistence type="inferred from homology"/>
<gene>
    <name evidence="1" type="primary">ispF</name>
    <name type="ordered locus">slr1542</name>
</gene>
<reference key="1">
    <citation type="journal article" date="1996" name="DNA Res.">
        <title>Sequence analysis of the genome of the unicellular cyanobacterium Synechocystis sp. strain PCC6803. II. Sequence determination of the entire genome and assignment of potential protein-coding regions.</title>
        <authorList>
            <person name="Kaneko T."/>
            <person name="Sato S."/>
            <person name="Kotani H."/>
            <person name="Tanaka A."/>
            <person name="Asamizu E."/>
            <person name="Nakamura Y."/>
            <person name="Miyajima N."/>
            <person name="Hirosawa M."/>
            <person name="Sugiura M."/>
            <person name="Sasamoto S."/>
            <person name="Kimura T."/>
            <person name="Hosouchi T."/>
            <person name="Matsuno A."/>
            <person name="Muraki A."/>
            <person name="Nakazaki N."/>
            <person name="Naruo K."/>
            <person name="Okumura S."/>
            <person name="Shimpo S."/>
            <person name="Takeuchi C."/>
            <person name="Wada T."/>
            <person name="Watanabe A."/>
            <person name="Yamada M."/>
            <person name="Yasuda M."/>
            <person name="Tabata S."/>
        </authorList>
    </citation>
    <scope>NUCLEOTIDE SEQUENCE [LARGE SCALE GENOMIC DNA]</scope>
    <source>
        <strain>ATCC 27184 / PCC 6803 / Kazusa</strain>
    </source>
</reference>
<organism>
    <name type="scientific">Synechocystis sp. (strain ATCC 27184 / PCC 6803 / Kazusa)</name>
    <dbReference type="NCBI Taxonomy" id="1111708"/>
    <lineage>
        <taxon>Bacteria</taxon>
        <taxon>Bacillati</taxon>
        <taxon>Cyanobacteriota</taxon>
        <taxon>Cyanophyceae</taxon>
        <taxon>Synechococcales</taxon>
        <taxon>Merismopediaceae</taxon>
        <taxon>Synechocystis</taxon>
    </lineage>
</organism>
<keyword id="KW-0414">Isoprene biosynthesis</keyword>
<keyword id="KW-0456">Lyase</keyword>
<keyword id="KW-0479">Metal-binding</keyword>
<keyword id="KW-1185">Reference proteome</keyword>
<evidence type="ECO:0000255" key="1">
    <source>
        <dbReference type="HAMAP-Rule" id="MF_00107"/>
    </source>
</evidence>
<feature type="chain" id="PRO_0000189508" description="2-C-methyl-D-erythritol 2,4-cyclodiphosphate synthase">
    <location>
        <begin position="1"/>
        <end position="161"/>
    </location>
</feature>
<feature type="binding site" evidence="1">
    <location>
        <begin position="11"/>
        <end position="13"/>
    </location>
    <ligand>
        <name>4-CDP-2-C-methyl-D-erythritol 2-phosphate</name>
        <dbReference type="ChEBI" id="CHEBI:57919"/>
    </ligand>
</feature>
<feature type="binding site" evidence="1">
    <location>
        <position position="11"/>
    </location>
    <ligand>
        <name>a divalent metal cation</name>
        <dbReference type="ChEBI" id="CHEBI:60240"/>
    </ligand>
</feature>
<feature type="binding site" evidence="1">
    <location>
        <position position="13"/>
    </location>
    <ligand>
        <name>a divalent metal cation</name>
        <dbReference type="ChEBI" id="CHEBI:60240"/>
    </ligand>
</feature>
<feature type="binding site" evidence="1">
    <location>
        <begin position="37"/>
        <end position="38"/>
    </location>
    <ligand>
        <name>4-CDP-2-C-methyl-D-erythritol 2-phosphate</name>
        <dbReference type="ChEBI" id="CHEBI:57919"/>
    </ligand>
</feature>
<feature type="binding site" evidence="1">
    <location>
        <position position="45"/>
    </location>
    <ligand>
        <name>a divalent metal cation</name>
        <dbReference type="ChEBI" id="CHEBI:60240"/>
    </ligand>
</feature>
<feature type="binding site" evidence="1">
    <location>
        <begin position="59"/>
        <end position="61"/>
    </location>
    <ligand>
        <name>4-CDP-2-C-methyl-D-erythritol 2-phosphate</name>
        <dbReference type="ChEBI" id="CHEBI:57919"/>
    </ligand>
</feature>
<feature type="binding site" evidence="1">
    <location>
        <begin position="135"/>
        <end position="138"/>
    </location>
    <ligand>
        <name>4-CDP-2-C-methyl-D-erythritol 2-phosphate</name>
        <dbReference type="ChEBI" id="CHEBI:57919"/>
    </ligand>
</feature>
<feature type="binding site" evidence="1">
    <location>
        <position position="145"/>
    </location>
    <ligand>
        <name>4-CDP-2-C-methyl-D-erythritol 2-phosphate</name>
        <dbReference type="ChEBI" id="CHEBI:57919"/>
    </ligand>
</feature>
<feature type="site" description="Transition state stabilizer" evidence="1">
    <location>
        <position position="37"/>
    </location>
</feature>
<feature type="site" description="Transition state stabilizer" evidence="1">
    <location>
        <position position="136"/>
    </location>
</feature>
<sequence>MTALRIGNGYDIHRLVGDRPLILGGVTIAHHLGLDGHSDADVLTHALMDALLGALSLGDIGHYFPPSDARWQGADSLKLLAQVHQLILERGWRINNLDNVIVAEQPKLKPHIQAMKENLAKVLTIDPDLIGIKATTNERLGPTGREEGIAAYSVALLIKEG</sequence>
<name>ISPF_SYNY3</name>